<reference key="1">
    <citation type="journal article" date="1993" name="FEBS Lett.">
        <title>WWamide-1, -2 and -3: novel neuromodulatory peptides isolated from ganglia of the African giant snail, Achatina fulica.</title>
        <authorList>
            <person name="Minakata H."/>
            <person name="Ikeda T."/>
            <person name="Muneoka Y."/>
            <person name="Kobayashi M."/>
            <person name="Nomoto K."/>
        </authorList>
    </citation>
    <scope>PROTEIN SEQUENCE</scope>
    <scope>AMIDATION AT TRP-7</scope>
    <source>
        <tissue>Ganglion</tissue>
    </source>
</reference>
<sequence length="7" mass="964">WKQMSVW</sequence>
<feature type="peptide" id="PRO_0000044230" description="WWamide-2">
    <location>
        <begin position="1"/>
        <end position="7"/>
    </location>
</feature>
<feature type="modified residue" description="Tryptophan amide" evidence="1">
    <location>
        <position position="7"/>
    </location>
</feature>
<evidence type="ECO:0000269" key="1">
    <source>
    </source>
</evidence>
<organism>
    <name type="scientific">Lissachatina fulica</name>
    <name type="common">Giant African land snail</name>
    <name type="synonym">Achatina fulica</name>
    <dbReference type="NCBI Taxonomy" id="2315439"/>
    <lineage>
        <taxon>Eukaryota</taxon>
        <taxon>Metazoa</taxon>
        <taxon>Spiralia</taxon>
        <taxon>Lophotrochozoa</taxon>
        <taxon>Mollusca</taxon>
        <taxon>Gastropoda</taxon>
        <taxon>Heterobranchia</taxon>
        <taxon>Euthyneura</taxon>
        <taxon>Panpulmonata</taxon>
        <taxon>Eupulmonata</taxon>
        <taxon>Stylommatophora</taxon>
        <taxon>Helicina</taxon>
        <taxon>Achatinoidea</taxon>
        <taxon>Achatinidae</taxon>
        <taxon>Lissachatina</taxon>
    </lineage>
</organism>
<dbReference type="PIR" id="S33246">
    <property type="entry name" value="S33246"/>
</dbReference>
<dbReference type="GO" id="GO:0007218">
    <property type="term" value="P:neuropeptide signaling pathway"/>
    <property type="evidence" value="ECO:0007669"/>
    <property type="project" value="UniProtKB-KW"/>
</dbReference>
<keyword id="KW-0027">Amidation</keyword>
<keyword id="KW-0903">Direct protein sequencing</keyword>
<keyword id="KW-0527">Neuropeptide</keyword>
<accession>P35920</accession>
<name>WWA2_LISFU</name>
<protein>
    <recommendedName>
        <fullName>WWamide-2</fullName>
    </recommendedName>
</protein>
<proteinExistence type="evidence at protein level"/>